<feature type="chain" id="PRO_0000201291" description="Uncharacterized protein jhp_0176">
    <location>
        <begin position="1"/>
        <end position="502"/>
    </location>
</feature>
<feature type="transmembrane region" description="Helical" evidence="1">
    <location>
        <begin position="1"/>
        <end position="21"/>
    </location>
</feature>
<feature type="domain" description="PLD phosphodiesterase 1" evidence="2">
    <location>
        <begin position="162"/>
        <end position="189"/>
    </location>
</feature>
<feature type="domain" description="PLD phosphodiesterase 2" evidence="2">
    <location>
        <begin position="396"/>
        <end position="423"/>
    </location>
</feature>
<evidence type="ECO:0000255" key="1"/>
<evidence type="ECO:0000255" key="2">
    <source>
        <dbReference type="PROSITE-ProRule" id="PRU00153"/>
    </source>
</evidence>
<evidence type="ECO:0000305" key="3"/>
<organism>
    <name type="scientific">Helicobacter pylori (strain J99 / ATCC 700824)</name>
    <name type="common">Campylobacter pylori J99</name>
    <dbReference type="NCBI Taxonomy" id="85963"/>
    <lineage>
        <taxon>Bacteria</taxon>
        <taxon>Pseudomonadati</taxon>
        <taxon>Campylobacterota</taxon>
        <taxon>Epsilonproteobacteria</taxon>
        <taxon>Campylobacterales</taxon>
        <taxon>Helicobacteraceae</taxon>
        <taxon>Helicobacter</taxon>
    </lineage>
</organism>
<protein>
    <recommendedName>
        <fullName>Uncharacterized protein jhp_0176</fullName>
    </recommendedName>
</protein>
<comment type="subcellular location">
    <subcellularLocation>
        <location evidence="3">Cell membrane</location>
        <topology evidence="3">Single-pass membrane protein</topology>
    </subcellularLocation>
</comment>
<comment type="similarity">
    <text evidence="3">Belongs to the phospholipase D family. Cardiolipin synthase subfamily.</text>
</comment>
<dbReference type="EMBL" id="AE001439">
    <property type="protein sequence ID" value="AAD05760.1"/>
    <property type="molecule type" value="Genomic_DNA"/>
</dbReference>
<dbReference type="PIR" id="E71963">
    <property type="entry name" value="E71963"/>
</dbReference>
<dbReference type="RefSeq" id="WP_000689052.1">
    <property type="nucleotide sequence ID" value="NC_000921.1"/>
</dbReference>
<dbReference type="KEGG" id="hpj:jhp_0176"/>
<dbReference type="PATRIC" id="fig|85963.30.peg.845"/>
<dbReference type="eggNOG" id="COG1502">
    <property type="taxonomic scope" value="Bacteria"/>
</dbReference>
<dbReference type="Proteomes" id="UP000000804">
    <property type="component" value="Chromosome"/>
</dbReference>
<dbReference type="GO" id="GO:0005886">
    <property type="term" value="C:plasma membrane"/>
    <property type="evidence" value="ECO:0007669"/>
    <property type="project" value="UniProtKB-SubCell"/>
</dbReference>
<dbReference type="GO" id="GO:0030572">
    <property type="term" value="F:phosphatidyltransferase activity"/>
    <property type="evidence" value="ECO:0007669"/>
    <property type="project" value="UniProtKB-ARBA"/>
</dbReference>
<dbReference type="GO" id="GO:0032049">
    <property type="term" value="P:cardiolipin biosynthetic process"/>
    <property type="evidence" value="ECO:0007669"/>
    <property type="project" value="UniProtKB-ARBA"/>
</dbReference>
<dbReference type="CDD" id="cd09111">
    <property type="entry name" value="PLDc_ymdC_like_1"/>
    <property type="match status" value="1"/>
</dbReference>
<dbReference type="CDD" id="cd09113">
    <property type="entry name" value="PLDc_ymdC_like_2"/>
    <property type="match status" value="1"/>
</dbReference>
<dbReference type="FunFam" id="3.30.870.10:FF:000070">
    <property type="entry name" value="Phospholipase D family protein"/>
    <property type="match status" value="1"/>
</dbReference>
<dbReference type="FunFam" id="3.30.870.10:FF:000074">
    <property type="entry name" value="Phospholipase D family protein"/>
    <property type="match status" value="1"/>
</dbReference>
<dbReference type="Gene3D" id="3.30.870.10">
    <property type="entry name" value="Endonuclease Chain A"/>
    <property type="match status" value="2"/>
</dbReference>
<dbReference type="InterPro" id="IPR025202">
    <property type="entry name" value="PLD-like_dom"/>
</dbReference>
<dbReference type="InterPro" id="IPR001736">
    <property type="entry name" value="PLipase_D/transphosphatidylase"/>
</dbReference>
<dbReference type="PANTHER" id="PTHR21248">
    <property type="entry name" value="CARDIOLIPIN SYNTHASE"/>
    <property type="match status" value="1"/>
</dbReference>
<dbReference type="PANTHER" id="PTHR21248:SF12">
    <property type="entry name" value="CARDIOLIPIN SYNTHASE C"/>
    <property type="match status" value="1"/>
</dbReference>
<dbReference type="Pfam" id="PF13091">
    <property type="entry name" value="PLDc_2"/>
    <property type="match status" value="2"/>
</dbReference>
<dbReference type="SMART" id="SM00155">
    <property type="entry name" value="PLDc"/>
    <property type="match status" value="2"/>
</dbReference>
<dbReference type="SUPFAM" id="SSF56024">
    <property type="entry name" value="Phospholipase D/nuclease"/>
    <property type="match status" value="2"/>
</dbReference>
<dbReference type="PROSITE" id="PS50035">
    <property type="entry name" value="PLD"/>
    <property type="match status" value="2"/>
</dbReference>
<keyword id="KW-1003">Cell membrane</keyword>
<keyword id="KW-0472">Membrane</keyword>
<keyword id="KW-0677">Repeat</keyword>
<keyword id="KW-0808">Transferase</keyword>
<keyword id="KW-0812">Transmembrane</keyword>
<keyword id="KW-1133">Transmembrane helix</keyword>
<gene>
    <name type="ordered locus">jhp_0176</name>
</gene>
<accession>Q9ZMP2</accession>
<proteinExistence type="inferred from homology"/>
<name>Y190_HELPJ</name>
<sequence>MKIFLVILSVFFFNGCFGLAYKTPISNPPISYDPYTTTIGSLYAKNLKENPKHSAAILLEDGFDALLHRVGLIRMSQKSIDMQTYIYKNDLSSQVIAKELLNAANRGVKVRILLDDNGLDSDFSDIMLLNFHKNIEVKIFNPYYIRNKGLRYFEMLADYERIKKRMHNKLFIVDNFAVIIGGRNIGDNYFDNDLDTNFLDLDALFFGGVASKAKESFENYWRFHRSIPVSLLRTHKRLKNNVKEIAKLHEKIPISAEDANEFEKKVNDFIERFQKYQYPIYYGNAIFLADLPAKIDTPLYSPIKIAFEKALKNAKDSVFIASSYFIPGKKIMKIFKNQISKGIELNILTNSLSSTDAIVVYGAWERYRNKLVRMGANVYEIRNDFFNRQIKGRFSTKHSLHGKTIVFDDALTLLGSFNIDPRSAYINTESAVLFDNPSFAKRVRLSLKDHAQQSWHLVLYRHRVIWEATEEGILIHEKNSPDTSFFLRLIKEWSKVLPEREL</sequence>
<reference key="1">
    <citation type="journal article" date="1999" name="Nature">
        <title>Genomic sequence comparison of two unrelated isolates of the human gastric pathogen Helicobacter pylori.</title>
        <authorList>
            <person name="Alm R.A."/>
            <person name="Ling L.-S.L."/>
            <person name="Moir D.T."/>
            <person name="King B.L."/>
            <person name="Brown E.D."/>
            <person name="Doig P.C."/>
            <person name="Smith D.R."/>
            <person name="Noonan B."/>
            <person name="Guild B.C."/>
            <person name="deJonge B.L."/>
            <person name="Carmel G."/>
            <person name="Tummino P.J."/>
            <person name="Caruso A."/>
            <person name="Uria-Nickelsen M."/>
            <person name="Mills D.M."/>
            <person name="Ives C."/>
            <person name="Gibson R."/>
            <person name="Merberg D."/>
            <person name="Mills S.D."/>
            <person name="Jiang Q."/>
            <person name="Taylor D.E."/>
            <person name="Vovis G.F."/>
            <person name="Trust T.J."/>
        </authorList>
    </citation>
    <scope>NUCLEOTIDE SEQUENCE [LARGE SCALE GENOMIC DNA]</scope>
    <source>
        <strain>J99 / ATCC 700824</strain>
    </source>
</reference>